<dbReference type="EMBL" id="CU329671">
    <property type="protein sequence ID" value="CAB86886.2"/>
    <property type="molecule type" value="Genomic_DNA"/>
</dbReference>
<dbReference type="RefSeq" id="NP_001019056.3">
    <property type="nucleotide sequence ID" value="NM_001023789.3"/>
</dbReference>
<dbReference type="BioGRID" id="280436">
    <property type="interactions" value="9"/>
</dbReference>
<dbReference type="FunCoup" id="Q9P7B0">
    <property type="interactions" value="271"/>
</dbReference>
<dbReference type="STRING" id="284812.Q9P7B0"/>
<dbReference type="iPTMnet" id="Q9P7B0"/>
<dbReference type="PaxDb" id="4896-SPBC1652.01.1"/>
<dbReference type="EnsemblFungi" id="SPBC1652.01.1">
    <property type="protein sequence ID" value="SPBC1652.01.1:pep"/>
    <property type="gene ID" value="SPBC1652.01"/>
</dbReference>
<dbReference type="GeneID" id="3361360"/>
<dbReference type="KEGG" id="spo:3361360"/>
<dbReference type="PomBase" id="SPBC1652.01">
    <property type="gene designation" value="stb3"/>
</dbReference>
<dbReference type="VEuPathDB" id="FungiDB:SPBC1652.01"/>
<dbReference type="eggNOG" id="ENOG502QW7S">
    <property type="taxonomic scope" value="Eukaryota"/>
</dbReference>
<dbReference type="HOGENOM" id="CLU_706287_0_0_1"/>
<dbReference type="InParanoid" id="Q9P7B0"/>
<dbReference type="OMA" id="VGWGRWI"/>
<dbReference type="PRO" id="PR:Q9P7B0"/>
<dbReference type="Proteomes" id="UP000002485">
    <property type="component" value="Chromosome II"/>
</dbReference>
<dbReference type="GO" id="GO:0005829">
    <property type="term" value="C:cytosol"/>
    <property type="evidence" value="ECO:0007005"/>
    <property type="project" value="PomBase"/>
</dbReference>
<dbReference type="GO" id="GO:0005634">
    <property type="term" value="C:nucleus"/>
    <property type="evidence" value="ECO:0000318"/>
    <property type="project" value="GO_Central"/>
</dbReference>
<dbReference type="GO" id="GO:0001228">
    <property type="term" value="F:DNA-binding transcription activator activity, RNA polymerase II-specific"/>
    <property type="evidence" value="ECO:0000266"/>
    <property type="project" value="PomBase"/>
</dbReference>
<dbReference type="GO" id="GO:0043565">
    <property type="term" value="F:sequence-specific DNA binding"/>
    <property type="evidence" value="ECO:0000318"/>
    <property type="project" value="GO_Central"/>
</dbReference>
<dbReference type="GO" id="GO:0000976">
    <property type="term" value="F:transcription cis-regulatory region binding"/>
    <property type="evidence" value="ECO:0000266"/>
    <property type="project" value="PomBase"/>
</dbReference>
<dbReference type="GO" id="GO:0045944">
    <property type="term" value="P:positive regulation of transcription by RNA polymerase II"/>
    <property type="evidence" value="ECO:0000266"/>
    <property type="project" value="PomBase"/>
</dbReference>
<dbReference type="InterPro" id="IPR018818">
    <property type="entry name" value="Stb3"/>
</dbReference>
<dbReference type="PANTHER" id="PTHR28164">
    <property type="entry name" value="PROTEIN STB3"/>
    <property type="match status" value="1"/>
</dbReference>
<dbReference type="PANTHER" id="PTHR28164:SF1">
    <property type="entry name" value="PROTEIN STB3"/>
    <property type="match status" value="1"/>
</dbReference>
<dbReference type="Pfam" id="PF10330">
    <property type="entry name" value="Stb3"/>
    <property type="match status" value="1"/>
</dbReference>
<comment type="subcellular location">
    <subcellularLocation>
        <location evidence="3">Cytoplasm</location>
    </subcellularLocation>
</comment>
<comment type="similarity">
    <text evidence="1">Belongs to the STB3 family.</text>
</comment>
<reference key="1">
    <citation type="journal article" date="2002" name="Nature">
        <title>The genome sequence of Schizosaccharomyces pombe.</title>
        <authorList>
            <person name="Wood V."/>
            <person name="Gwilliam R."/>
            <person name="Rajandream M.A."/>
            <person name="Lyne M.H."/>
            <person name="Lyne R."/>
            <person name="Stewart A."/>
            <person name="Sgouros J.G."/>
            <person name="Peat N."/>
            <person name="Hayles J."/>
            <person name="Baker S.G."/>
            <person name="Basham D."/>
            <person name="Bowman S."/>
            <person name="Brooks K."/>
            <person name="Brown D."/>
            <person name="Brown S."/>
            <person name="Chillingworth T."/>
            <person name="Churcher C.M."/>
            <person name="Collins M."/>
            <person name="Connor R."/>
            <person name="Cronin A."/>
            <person name="Davis P."/>
            <person name="Feltwell T."/>
            <person name="Fraser A."/>
            <person name="Gentles S."/>
            <person name="Goble A."/>
            <person name="Hamlin N."/>
            <person name="Harris D.E."/>
            <person name="Hidalgo J."/>
            <person name="Hodgson G."/>
            <person name="Holroyd S."/>
            <person name="Hornsby T."/>
            <person name="Howarth S."/>
            <person name="Huckle E.J."/>
            <person name="Hunt S."/>
            <person name="Jagels K."/>
            <person name="James K.D."/>
            <person name="Jones L."/>
            <person name="Jones M."/>
            <person name="Leather S."/>
            <person name="McDonald S."/>
            <person name="McLean J."/>
            <person name="Mooney P."/>
            <person name="Moule S."/>
            <person name="Mungall K.L."/>
            <person name="Murphy L.D."/>
            <person name="Niblett D."/>
            <person name="Odell C."/>
            <person name="Oliver K."/>
            <person name="O'Neil S."/>
            <person name="Pearson D."/>
            <person name="Quail M.A."/>
            <person name="Rabbinowitsch E."/>
            <person name="Rutherford K.M."/>
            <person name="Rutter S."/>
            <person name="Saunders D."/>
            <person name="Seeger K."/>
            <person name="Sharp S."/>
            <person name="Skelton J."/>
            <person name="Simmonds M.N."/>
            <person name="Squares R."/>
            <person name="Squares S."/>
            <person name="Stevens K."/>
            <person name="Taylor K."/>
            <person name="Taylor R.G."/>
            <person name="Tivey A."/>
            <person name="Walsh S.V."/>
            <person name="Warren T."/>
            <person name="Whitehead S."/>
            <person name="Woodward J.R."/>
            <person name="Volckaert G."/>
            <person name="Aert R."/>
            <person name="Robben J."/>
            <person name="Grymonprez B."/>
            <person name="Weltjens I."/>
            <person name="Vanstreels E."/>
            <person name="Rieger M."/>
            <person name="Schaefer M."/>
            <person name="Mueller-Auer S."/>
            <person name="Gabel C."/>
            <person name="Fuchs M."/>
            <person name="Duesterhoeft A."/>
            <person name="Fritzc C."/>
            <person name="Holzer E."/>
            <person name="Moestl D."/>
            <person name="Hilbert H."/>
            <person name="Borzym K."/>
            <person name="Langer I."/>
            <person name="Beck A."/>
            <person name="Lehrach H."/>
            <person name="Reinhardt R."/>
            <person name="Pohl T.M."/>
            <person name="Eger P."/>
            <person name="Zimmermann W."/>
            <person name="Wedler H."/>
            <person name="Wambutt R."/>
            <person name="Purnelle B."/>
            <person name="Goffeau A."/>
            <person name="Cadieu E."/>
            <person name="Dreano S."/>
            <person name="Gloux S."/>
            <person name="Lelaure V."/>
            <person name="Mottier S."/>
            <person name="Galibert F."/>
            <person name="Aves S.J."/>
            <person name="Xiang Z."/>
            <person name="Hunt C."/>
            <person name="Moore K."/>
            <person name="Hurst S.M."/>
            <person name="Lucas M."/>
            <person name="Rochet M."/>
            <person name="Gaillardin C."/>
            <person name="Tallada V.A."/>
            <person name="Garzon A."/>
            <person name="Thode G."/>
            <person name="Daga R.R."/>
            <person name="Cruzado L."/>
            <person name="Jimenez J."/>
            <person name="Sanchez M."/>
            <person name="del Rey F."/>
            <person name="Benito J."/>
            <person name="Dominguez A."/>
            <person name="Revuelta J.L."/>
            <person name="Moreno S."/>
            <person name="Armstrong J."/>
            <person name="Forsburg S.L."/>
            <person name="Cerutti L."/>
            <person name="Lowe T."/>
            <person name="McCombie W.R."/>
            <person name="Paulsen I."/>
            <person name="Potashkin J."/>
            <person name="Shpakovski G.V."/>
            <person name="Ussery D."/>
            <person name="Barrell B.G."/>
            <person name="Nurse P."/>
        </authorList>
    </citation>
    <scope>NUCLEOTIDE SEQUENCE [LARGE SCALE GENOMIC DNA]</scope>
    <source>
        <strain>972 / ATCC 24843</strain>
    </source>
</reference>
<reference key="2">
    <citation type="journal article" date="2011" name="Science">
        <title>Comparative functional genomics of the fission yeasts.</title>
        <authorList>
            <person name="Rhind N."/>
            <person name="Chen Z."/>
            <person name="Yassour M."/>
            <person name="Thompson D.A."/>
            <person name="Haas B.J."/>
            <person name="Habib N."/>
            <person name="Wapinski I."/>
            <person name="Roy S."/>
            <person name="Lin M.F."/>
            <person name="Heiman D.I."/>
            <person name="Young S.K."/>
            <person name="Furuya K."/>
            <person name="Guo Y."/>
            <person name="Pidoux A."/>
            <person name="Chen H.M."/>
            <person name="Robbertse B."/>
            <person name="Goldberg J.M."/>
            <person name="Aoki K."/>
            <person name="Bayne E.H."/>
            <person name="Berlin A.M."/>
            <person name="Desjardins C.A."/>
            <person name="Dobbs E."/>
            <person name="Dukaj L."/>
            <person name="Fan L."/>
            <person name="FitzGerald M.G."/>
            <person name="French C."/>
            <person name="Gujja S."/>
            <person name="Hansen K."/>
            <person name="Keifenheim D."/>
            <person name="Levin J.Z."/>
            <person name="Mosher R.A."/>
            <person name="Mueller C.A."/>
            <person name="Pfiffner J."/>
            <person name="Priest M."/>
            <person name="Russ C."/>
            <person name="Smialowska A."/>
            <person name="Swoboda P."/>
            <person name="Sykes S.M."/>
            <person name="Vaughn M."/>
            <person name="Vengrova S."/>
            <person name="Yoder R."/>
            <person name="Zeng Q."/>
            <person name="Allshire R."/>
            <person name="Baulcombe D."/>
            <person name="Birren B.W."/>
            <person name="Brown W."/>
            <person name="Ekwall K."/>
            <person name="Kellis M."/>
            <person name="Leatherwood J."/>
            <person name="Levin H."/>
            <person name="Margalit H."/>
            <person name="Martienssen R."/>
            <person name="Nieduszynski C.A."/>
            <person name="Spatafora J.W."/>
            <person name="Friedman N."/>
            <person name="Dalgaard J.Z."/>
            <person name="Baumann P."/>
            <person name="Niki H."/>
            <person name="Regev A."/>
            <person name="Nusbaum C."/>
        </authorList>
    </citation>
    <scope>REVISION OF GENE MODEL</scope>
</reference>
<reference evidence="5" key="3">
    <citation type="journal article" date="2006" name="Nat. Biotechnol.">
        <title>ORFeome cloning and global analysis of protein localization in the fission yeast Schizosaccharomyces pombe.</title>
        <authorList>
            <person name="Matsuyama A."/>
            <person name="Arai R."/>
            <person name="Yashiroda Y."/>
            <person name="Shirai A."/>
            <person name="Kamata A."/>
            <person name="Sekido S."/>
            <person name="Kobayashi Y."/>
            <person name="Hashimoto A."/>
            <person name="Hamamoto M."/>
            <person name="Hiraoka Y."/>
            <person name="Horinouchi S."/>
            <person name="Yoshida M."/>
        </authorList>
    </citation>
    <scope>SUBCELLULAR LOCATION [LARGE SCALE ANALYSIS]</scope>
</reference>
<reference evidence="5" key="4">
    <citation type="journal article" date="2008" name="J. Proteome Res.">
        <title>Phosphoproteome analysis of fission yeast.</title>
        <authorList>
            <person name="Wilson-Grady J.T."/>
            <person name="Villen J."/>
            <person name="Gygi S.P."/>
        </authorList>
    </citation>
    <scope>PHOSPHORYLATION [LARGE SCALE ANALYSIS] AT SER-194 AND SER-199</scope>
    <scope>IDENTIFICATION BY MASS SPECTROMETRY</scope>
</reference>
<evidence type="ECO:0000255" key="1"/>
<evidence type="ECO:0000256" key="2">
    <source>
        <dbReference type="SAM" id="MobiDB-lite"/>
    </source>
</evidence>
<evidence type="ECO:0000269" key="3">
    <source>
    </source>
</evidence>
<evidence type="ECO:0000269" key="4">
    <source>
    </source>
</evidence>
<evidence type="ECO:0000305" key="5"/>
<name>STB3_SCHPO</name>
<accession>Q9P7B0</accession>
<feature type="chain" id="PRO_0000352765" description="Protein STB3 homolog">
    <location>
        <begin position="1"/>
        <end position="391"/>
    </location>
</feature>
<feature type="region of interest" description="Disordered" evidence="2">
    <location>
        <begin position="1"/>
        <end position="29"/>
    </location>
</feature>
<feature type="region of interest" description="Disordered" evidence="2">
    <location>
        <begin position="85"/>
        <end position="105"/>
    </location>
</feature>
<feature type="region of interest" description="Disordered" evidence="2">
    <location>
        <begin position="189"/>
        <end position="253"/>
    </location>
</feature>
<feature type="compositionally biased region" description="Basic and acidic residues" evidence="2">
    <location>
        <begin position="16"/>
        <end position="29"/>
    </location>
</feature>
<feature type="compositionally biased region" description="Low complexity" evidence="2">
    <location>
        <begin position="90"/>
        <end position="105"/>
    </location>
</feature>
<feature type="compositionally biased region" description="Polar residues" evidence="2">
    <location>
        <begin position="189"/>
        <end position="201"/>
    </location>
</feature>
<feature type="compositionally biased region" description="Polar residues" evidence="2">
    <location>
        <begin position="209"/>
        <end position="229"/>
    </location>
</feature>
<feature type="modified residue" description="Phosphoserine" evidence="4">
    <location>
        <position position="194"/>
    </location>
</feature>
<feature type="modified residue" description="Phosphoserine" evidence="4">
    <location>
        <position position="199"/>
    </location>
</feature>
<protein>
    <recommendedName>
        <fullName>Protein STB3 homolog</fullName>
    </recommendedName>
</protein>
<gene>
    <name type="primary">stb3</name>
    <name type="ORF">SPBC1652.01</name>
</gene>
<organism>
    <name type="scientific">Schizosaccharomyces pombe (strain 972 / ATCC 24843)</name>
    <name type="common">Fission yeast</name>
    <dbReference type="NCBI Taxonomy" id="284812"/>
    <lineage>
        <taxon>Eukaryota</taxon>
        <taxon>Fungi</taxon>
        <taxon>Dikarya</taxon>
        <taxon>Ascomycota</taxon>
        <taxon>Taphrinomycotina</taxon>
        <taxon>Schizosaccharomycetes</taxon>
        <taxon>Schizosaccharomycetales</taxon>
        <taxon>Schizosaccharomycetaceae</taxon>
        <taxon>Schizosaccharomyces</taxon>
    </lineage>
</organism>
<keyword id="KW-0963">Cytoplasm</keyword>
<keyword id="KW-0597">Phosphoprotein</keyword>
<keyword id="KW-1185">Reference proteome</keyword>
<sequence>MNIDNMDLEMTTASDFAEKKESVDVKRENPSFTNSIKALPIQSELSAMMSKDNTLNHVKQEPSDGFSSVKWASTSFDSTVTAHKEETPYSSSLGSHDSSSLPSSTNNRYSSVLKELCNTYLPSILSTYGSLPIRRLLHHLSLMLPSFNELTPTQQRRLLTRALESKKGIQFEKIGWGRWVLRDSTIPANSHPQSLPSNSIPKTEPLDTPSLSNSQERFSKSPSDGQNVRSRAKKIPSGMSAEESDELLSSSGRKTRSFNTPFSSFFASLEETPGSYTAHLGGVLSPREQTPALFTGQYPDNGVYYEEEEEEEDDNDLFDEHEYGYGTLPPFVFDEDQMLDGGESTDEEDWRAIGTEALLRKVNTKKRRPSRVLVHRDQVAVEAMLMLSGSV</sequence>
<proteinExistence type="evidence at protein level"/>